<sequence length="282" mass="30549">MSRWPSPAKLNLFLYITGQRADGYHTLQTLFQFLDYGDTLTIEPRTDGQLRLLTPVAGVPDEENLIVRAARLLMRAASESDRLPAGSGADISVDKRLPMGGGLGGGSSNAATVLVALNHLWGCGLSEEELATLGLQLGADVPVFVRGHAAFAEGVGEILTPVEPEEKWYLVAHPGVSIPTPVIFRDPELPRNTPRRSINTLLNCEFSNDCELIARKRFREVDAALSWLLEYAPSRLTGTGACVFAEFNTESAARQVLDTAPAWLNGFVARGVNLSPLKQALL</sequence>
<proteinExistence type="inferred from homology"/>
<accession>B5XW48</accession>
<gene>
    <name evidence="1" type="primary">ispE</name>
    <name type="ordered locus">KPK_2066</name>
</gene>
<evidence type="ECO:0000255" key="1">
    <source>
        <dbReference type="HAMAP-Rule" id="MF_00061"/>
    </source>
</evidence>
<feature type="chain" id="PRO_1000092091" description="4-diphosphocytidyl-2-C-methyl-D-erythritol kinase">
    <location>
        <begin position="1"/>
        <end position="282"/>
    </location>
</feature>
<feature type="active site" evidence="1">
    <location>
        <position position="9"/>
    </location>
</feature>
<feature type="active site" evidence="1">
    <location>
        <position position="140"/>
    </location>
</feature>
<feature type="binding site" evidence="1">
    <location>
        <begin position="98"/>
        <end position="108"/>
    </location>
    <ligand>
        <name>ATP</name>
        <dbReference type="ChEBI" id="CHEBI:30616"/>
    </ligand>
</feature>
<name>ISPE_KLEP3</name>
<dbReference type="EC" id="2.7.1.148" evidence="1"/>
<dbReference type="EMBL" id="CP000964">
    <property type="protein sequence ID" value="ACI06971.1"/>
    <property type="molecule type" value="Genomic_DNA"/>
</dbReference>
<dbReference type="SMR" id="B5XW48"/>
<dbReference type="KEGG" id="kpe:KPK_2066"/>
<dbReference type="HOGENOM" id="CLU_053057_3_0_6"/>
<dbReference type="UniPathway" id="UPA00056">
    <property type="reaction ID" value="UER00094"/>
</dbReference>
<dbReference type="Proteomes" id="UP000001734">
    <property type="component" value="Chromosome"/>
</dbReference>
<dbReference type="GO" id="GO:0050515">
    <property type="term" value="F:4-(cytidine 5'-diphospho)-2-C-methyl-D-erythritol kinase activity"/>
    <property type="evidence" value="ECO:0007669"/>
    <property type="project" value="UniProtKB-UniRule"/>
</dbReference>
<dbReference type="GO" id="GO:0005524">
    <property type="term" value="F:ATP binding"/>
    <property type="evidence" value="ECO:0007669"/>
    <property type="project" value="UniProtKB-UniRule"/>
</dbReference>
<dbReference type="GO" id="GO:0019288">
    <property type="term" value="P:isopentenyl diphosphate biosynthetic process, methylerythritol 4-phosphate pathway"/>
    <property type="evidence" value="ECO:0007669"/>
    <property type="project" value="UniProtKB-UniRule"/>
</dbReference>
<dbReference type="GO" id="GO:0016114">
    <property type="term" value="P:terpenoid biosynthetic process"/>
    <property type="evidence" value="ECO:0007669"/>
    <property type="project" value="InterPro"/>
</dbReference>
<dbReference type="FunFam" id="3.30.230.10:FF:000022">
    <property type="entry name" value="4-diphosphocytidyl-2-C-methyl-D-erythritol kinase"/>
    <property type="match status" value="1"/>
</dbReference>
<dbReference type="FunFam" id="3.30.70.890:FF:000004">
    <property type="entry name" value="4-diphosphocytidyl-2-C-methyl-D-erythritol kinase"/>
    <property type="match status" value="1"/>
</dbReference>
<dbReference type="Gene3D" id="3.30.230.10">
    <property type="match status" value="1"/>
</dbReference>
<dbReference type="Gene3D" id="3.30.70.890">
    <property type="entry name" value="GHMP kinase, C-terminal domain"/>
    <property type="match status" value="1"/>
</dbReference>
<dbReference type="HAMAP" id="MF_00061">
    <property type="entry name" value="IspE"/>
    <property type="match status" value="1"/>
</dbReference>
<dbReference type="InterPro" id="IPR013750">
    <property type="entry name" value="GHMP_kinase_C_dom"/>
</dbReference>
<dbReference type="InterPro" id="IPR036554">
    <property type="entry name" value="GHMP_kinase_C_sf"/>
</dbReference>
<dbReference type="InterPro" id="IPR006204">
    <property type="entry name" value="GHMP_kinase_N_dom"/>
</dbReference>
<dbReference type="InterPro" id="IPR004424">
    <property type="entry name" value="IspE"/>
</dbReference>
<dbReference type="InterPro" id="IPR020568">
    <property type="entry name" value="Ribosomal_Su5_D2-typ_SF"/>
</dbReference>
<dbReference type="InterPro" id="IPR014721">
    <property type="entry name" value="Ribsml_uS5_D2-typ_fold_subgr"/>
</dbReference>
<dbReference type="NCBIfam" id="TIGR00154">
    <property type="entry name" value="ispE"/>
    <property type="match status" value="1"/>
</dbReference>
<dbReference type="PANTHER" id="PTHR43527">
    <property type="entry name" value="4-DIPHOSPHOCYTIDYL-2-C-METHYL-D-ERYTHRITOL KINASE, CHLOROPLASTIC"/>
    <property type="match status" value="1"/>
</dbReference>
<dbReference type="PANTHER" id="PTHR43527:SF2">
    <property type="entry name" value="4-DIPHOSPHOCYTIDYL-2-C-METHYL-D-ERYTHRITOL KINASE, CHLOROPLASTIC"/>
    <property type="match status" value="1"/>
</dbReference>
<dbReference type="Pfam" id="PF08544">
    <property type="entry name" value="GHMP_kinases_C"/>
    <property type="match status" value="1"/>
</dbReference>
<dbReference type="Pfam" id="PF00288">
    <property type="entry name" value="GHMP_kinases_N"/>
    <property type="match status" value="1"/>
</dbReference>
<dbReference type="PIRSF" id="PIRSF010376">
    <property type="entry name" value="IspE"/>
    <property type="match status" value="1"/>
</dbReference>
<dbReference type="SUPFAM" id="SSF55060">
    <property type="entry name" value="GHMP Kinase, C-terminal domain"/>
    <property type="match status" value="1"/>
</dbReference>
<dbReference type="SUPFAM" id="SSF54211">
    <property type="entry name" value="Ribosomal protein S5 domain 2-like"/>
    <property type="match status" value="1"/>
</dbReference>
<keyword id="KW-0067">ATP-binding</keyword>
<keyword id="KW-0414">Isoprene biosynthesis</keyword>
<keyword id="KW-0418">Kinase</keyword>
<keyword id="KW-0547">Nucleotide-binding</keyword>
<keyword id="KW-0808">Transferase</keyword>
<organism>
    <name type="scientific">Klebsiella pneumoniae (strain 342)</name>
    <dbReference type="NCBI Taxonomy" id="507522"/>
    <lineage>
        <taxon>Bacteria</taxon>
        <taxon>Pseudomonadati</taxon>
        <taxon>Pseudomonadota</taxon>
        <taxon>Gammaproteobacteria</taxon>
        <taxon>Enterobacterales</taxon>
        <taxon>Enterobacteriaceae</taxon>
        <taxon>Klebsiella/Raoultella group</taxon>
        <taxon>Klebsiella</taxon>
        <taxon>Klebsiella pneumoniae complex</taxon>
    </lineage>
</organism>
<comment type="function">
    <text evidence="1">Catalyzes the phosphorylation of the position 2 hydroxy group of 4-diphosphocytidyl-2C-methyl-D-erythritol.</text>
</comment>
<comment type="catalytic activity">
    <reaction evidence="1">
        <text>4-CDP-2-C-methyl-D-erythritol + ATP = 4-CDP-2-C-methyl-D-erythritol 2-phosphate + ADP + H(+)</text>
        <dbReference type="Rhea" id="RHEA:18437"/>
        <dbReference type="ChEBI" id="CHEBI:15378"/>
        <dbReference type="ChEBI" id="CHEBI:30616"/>
        <dbReference type="ChEBI" id="CHEBI:57823"/>
        <dbReference type="ChEBI" id="CHEBI:57919"/>
        <dbReference type="ChEBI" id="CHEBI:456216"/>
        <dbReference type="EC" id="2.7.1.148"/>
    </reaction>
</comment>
<comment type="pathway">
    <text evidence="1">Isoprenoid biosynthesis; isopentenyl diphosphate biosynthesis via DXP pathway; isopentenyl diphosphate from 1-deoxy-D-xylulose 5-phosphate: step 3/6.</text>
</comment>
<comment type="subunit">
    <text evidence="1">Homodimer.</text>
</comment>
<comment type="similarity">
    <text evidence="1">Belongs to the GHMP kinase family. IspE subfamily.</text>
</comment>
<reference key="1">
    <citation type="journal article" date="2008" name="PLoS Genet.">
        <title>Complete genome sequence of the N2-fixing broad host range endophyte Klebsiella pneumoniae 342 and virulence predictions verified in mice.</title>
        <authorList>
            <person name="Fouts D.E."/>
            <person name="Tyler H.L."/>
            <person name="DeBoy R.T."/>
            <person name="Daugherty S."/>
            <person name="Ren Q."/>
            <person name="Badger J.H."/>
            <person name="Durkin A.S."/>
            <person name="Huot H."/>
            <person name="Shrivastava S."/>
            <person name="Kothari S."/>
            <person name="Dodson R.J."/>
            <person name="Mohamoud Y."/>
            <person name="Khouri H."/>
            <person name="Roesch L.F.W."/>
            <person name="Krogfelt K.A."/>
            <person name="Struve C."/>
            <person name="Triplett E.W."/>
            <person name="Methe B.A."/>
        </authorList>
    </citation>
    <scope>NUCLEOTIDE SEQUENCE [LARGE SCALE GENOMIC DNA]</scope>
    <source>
        <strain>342</strain>
    </source>
</reference>
<protein>
    <recommendedName>
        <fullName evidence="1">4-diphosphocytidyl-2-C-methyl-D-erythritol kinase</fullName>
        <shortName evidence="1">CMK</shortName>
        <ecNumber evidence="1">2.7.1.148</ecNumber>
    </recommendedName>
    <alternativeName>
        <fullName evidence="1">4-(cytidine-5'-diphospho)-2-C-methyl-D-erythritol kinase</fullName>
    </alternativeName>
</protein>